<proteinExistence type="evidence at protein level"/>
<dbReference type="EMBL" id="AK022636">
    <property type="protein sequence ID" value="BAB14145.1"/>
    <property type="status" value="ALT_INIT"/>
    <property type="molecule type" value="mRNA"/>
</dbReference>
<dbReference type="EMBL" id="AK057375">
    <property type="protein sequence ID" value="BAB71457.1"/>
    <property type="status" value="ALT_TERM"/>
    <property type="molecule type" value="mRNA"/>
</dbReference>
<dbReference type="EMBL" id="BX664608">
    <property type="status" value="NOT_ANNOTATED_CDS"/>
    <property type="molecule type" value="Genomic_DNA"/>
</dbReference>
<dbReference type="EMBL" id="AL353770">
    <property type="status" value="NOT_ANNOTATED_CDS"/>
    <property type="molecule type" value="Genomic_DNA"/>
</dbReference>
<dbReference type="EMBL" id="BC031626">
    <property type="protein sequence ID" value="AAH31626.1"/>
    <property type="status" value="ALT_INIT"/>
    <property type="molecule type" value="mRNA"/>
</dbReference>
<dbReference type="EMBL" id="AL110217">
    <property type="protein sequence ID" value="CAB53677.2"/>
    <property type="status" value="ALT_INIT"/>
    <property type="molecule type" value="mRNA"/>
</dbReference>
<dbReference type="CCDS" id="CCDS75846.1">
    <molecule id="Q5TYW1-1"/>
</dbReference>
<dbReference type="PIR" id="T14757">
    <property type="entry name" value="T14757"/>
</dbReference>
<dbReference type="RefSeq" id="NP_001304845.1">
    <molecule id="Q5TYW1-1"/>
    <property type="nucleotide sequence ID" value="NM_001317916.2"/>
</dbReference>
<dbReference type="RefSeq" id="NP_149350.3">
    <molecule id="Q5TYW1-1"/>
    <property type="nucleotide sequence ID" value="NM_033160.6"/>
</dbReference>
<dbReference type="RefSeq" id="XP_005272572.1">
    <molecule id="Q5TYW1-1"/>
    <property type="nucleotide sequence ID" value="XM_005272515.6"/>
</dbReference>
<dbReference type="RefSeq" id="XP_011543981.1">
    <molecule id="Q5TYW1-1"/>
    <property type="nucleotide sequence ID" value="XM_011545679.4"/>
</dbReference>
<dbReference type="RefSeq" id="XP_016870103.1">
    <property type="nucleotide sequence ID" value="XM_017014614.1"/>
</dbReference>
<dbReference type="RefSeq" id="XP_047279168.1">
    <molecule id="Q5TYW1-1"/>
    <property type="nucleotide sequence ID" value="XM_047423212.1"/>
</dbReference>
<dbReference type="RefSeq" id="XP_054218679.1">
    <molecule id="Q5TYW1-1"/>
    <property type="nucleotide sequence ID" value="XM_054362704.1"/>
</dbReference>
<dbReference type="RefSeq" id="XP_054218680.1">
    <molecule id="Q5TYW1-1"/>
    <property type="nucleotide sequence ID" value="XM_054362705.1"/>
</dbReference>
<dbReference type="RefSeq" id="XP_054218681.1">
    <molecule id="Q5TYW1-1"/>
    <property type="nucleotide sequence ID" value="XM_054362706.1"/>
</dbReference>
<dbReference type="SMR" id="Q5TYW1"/>
<dbReference type="BioGRID" id="117580">
    <property type="interactions" value="8"/>
</dbReference>
<dbReference type="FunCoup" id="Q5TYW1">
    <property type="interactions" value="73"/>
</dbReference>
<dbReference type="IntAct" id="Q5TYW1">
    <property type="interactions" value="5"/>
</dbReference>
<dbReference type="STRING" id="9606.ENSP00000482540"/>
<dbReference type="GlyGen" id="Q5TYW1">
    <property type="glycosylation" value="1 site, 1 O-linked glycan (1 site)"/>
</dbReference>
<dbReference type="iPTMnet" id="Q5TYW1"/>
<dbReference type="PhosphoSitePlus" id="Q5TYW1"/>
<dbReference type="BioMuta" id="ZNF658"/>
<dbReference type="DMDM" id="134035376"/>
<dbReference type="jPOST" id="Q5TYW1"/>
<dbReference type="MassIVE" id="Q5TYW1"/>
<dbReference type="PaxDb" id="9606-ENSP00000482540"/>
<dbReference type="PeptideAtlas" id="Q5TYW1"/>
<dbReference type="ProteomicsDB" id="65209">
    <molecule id="Q5TYW1-1"/>
</dbReference>
<dbReference type="ProteomicsDB" id="65210">
    <molecule id="Q5TYW1-2"/>
</dbReference>
<dbReference type="Antibodypedia" id="74757">
    <property type="antibodies" value="29 antibodies from 12 providers"/>
</dbReference>
<dbReference type="DNASU" id="26149"/>
<dbReference type="Ensembl" id="ENST00000612867.4">
    <molecule id="Q5TYW1-1"/>
    <property type="protein sequence ID" value="ENSP00000482540.1"/>
    <property type="gene ID" value="ENSG00000274349.5"/>
</dbReference>
<dbReference type="Ensembl" id="ENST00000621410.5">
    <molecule id="Q5TYW1-1"/>
    <property type="protein sequence ID" value="ENSP00000482447.1"/>
    <property type="gene ID" value="ENSG00000274349.5"/>
</dbReference>
<dbReference type="Ensembl" id="ENST00000622180.4">
    <molecule id="Q5TYW1-2"/>
    <property type="protein sequence ID" value="ENSP00000480919.1"/>
    <property type="gene ID" value="ENSG00000274349.5"/>
</dbReference>
<dbReference type="GeneID" id="26149"/>
<dbReference type="KEGG" id="hsa:26149"/>
<dbReference type="MANE-Select" id="ENST00000621410.5">
    <property type="protein sequence ID" value="ENSP00000482447.1"/>
    <property type="RefSeq nucleotide sequence ID" value="NM_033160.7"/>
    <property type="RefSeq protein sequence ID" value="NP_149350.3"/>
</dbReference>
<dbReference type="UCSC" id="uc004abs.2">
    <molecule id="Q5TYW1-1"/>
    <property type="organism name" value="human"/>
</dbReference>
<dbReference type="AGR" id="HGNC:25226"/>
<dbReference type="CTD" id="26149"/>
<dbReference type="DisGeNET" id="26149"/>
<dbReference type="GeneCards" id="ZNF658"/>
<dbReference type="HGNC" id="HGNC:25226">
    <property type="gene designation" value="ZNF658"/>
</dbReference>
<dbReference type="HPA" id="ENSG00000274349">
    <property type="expression patterns" value="Low tissue specificity"/>
</dbReference>
<dbReference type="MIM" id="616290">
    <property type="type" value="gene"/>
</dbReference>
<dbReference type="neXtProt" id="NX_Q5TYW1"/>
<dbReference type="OpenTargets" id="ENSG00000274349"/>
<dbReference type="PharmGKB" id="PA134907871"/>
<dbReference type="VEuPathDB" id="HostDB:ENSG00000274349"/>
<dbReference type="eggNOG" id="KOG1721">
    <property type="taxonomic scope" value="Eukaryota"/>
</dbReference>
<dbReference type="GeneTree" id="ENSGT00940000163669"/>
<dbReference type="HOGENOM" id="CLU_002678_17_4_1"/>
<dbReference type="InParanoid" id="Q5TYW1"/>
<dbReference type="OMA" id="WQVIFTD"/>
<dbReference type="OrthoDB" id="6077919at2759"/>
<dbReference type="PAN-GO" id="Q5TYW1">
    <property type="GO annotations" value="4 GO annotations based on evolutionary models"/>
</dbReference>
<dbReference type="PhylomeDB" id="Q5TYW1"/>
<dbReference type="TreeFam" id="TF350905"/>
<dbReference type="PathwayCommons" id="Q5TYW1"/>
<dbReference type="Reactome" id="R-HSA-212436">
    <property type="pathway name" value="Generic Transcription Pathway"/>
</dbReference>
<dbReference type="SignaLink" id="Q5TYW1"/>
<dbReference type="BioGRID-ORCS" id="26149">
    <property type="hits" value="67 hits in 1128 CRISPR screens"/>
</dbReference>
<dbReference type="GenomeRNAi" id="26149"/>
<dbReference type="Pharos" id="Q5TYW1">
    <property type="development level" value="Tbio"/>
</dbReference>
<dbReference type="PRO" id="PR:Q5TYW1"/>
<dbReference type="Proteomes" id="UP000005640">
    <property type="component" value="Chromosome 9"/>
</dbReference>
<dbReference type="RNAct" id="Q5TYW1">
    <property type="molecule type" value="protein"/>
</dbReference>
<dbReference type="Bgee" id="ENSG00000274349">
    <property type="expression patterns" value="Expressed in calcaneal tendon and 105 other cell types or tissues"/>
</dbReference>
<dbReference type="ExpressionAtlas" id="Q5TYW1">
    <property type="expression patterns" value="baseline and differential"/>
</dbReference>
<dbReference type="GO" id="GO:0005634">
    <property type="term" value="C:nucleus"/>
    <property type="evidence" value="ECO:0000318"/>
    <property type="project" value="GO_Central"/>
</dbReference>
<dbReference type="GO" id="GO:0000976">
    <property type="term" value="F:transcription cis-regulatory region binding"/>
    <property type="evidence" value="ECO:0000314"/>
    <property type="project" value="UniProtKB"/>
</dbReference>
<dbReference type="GO" id="GO:0008270">
    <property type="term" value="F:zinc ion binding"/>
    <property type="evidence" value="ECO:0007669"/>
    <property type="project" value="UniProtKB-KW"/>
</dbReference>
<dbReference type="GO" id="GO:0071294">
    <property type="term" value="P:cellular response to zinc ion"/>
    <property type="evidence" value="ECO:0000315"/>
    <property type="project" value="UniProtKB"/>
</dbReference>
<dbReference type="GO" id="GO:0045892">
    <property type="term" value="P:negative regulation of DNA-templated transcription"/>
    <property type="evidence" value="ECO:0000315"/>
    <property type="project" value="UniProtKB"/>
</dbReference>
<dbReference type="GO" id="GO:0006357">
    <property type="term" value="P:regulation of transcription by RNA polymerase II"/>
    <property type="evidence" value="ECO:0000318"/>
    <property type="project" value="GO_Central"/>
</dbReference>
<dbReference type="GO" id="GO:0042254">
    <property type="term" value="P:ribosome biogenesis"/>
    <property type="evidence" value="ECO:0000315"/>
    <property type="project" value="UniProtKB"/>
</dbReference>
<dbReference type="CDD" id="cd07765">
    <property type="entry name" value="KRAB_A-box"/>
    <property type="match status" value="1"/>
</dbReference>
<dbReference type="FunFam" id="3.30.160.60:FF:003795">
    <property type="match status" value="1"/>
</dbReference>
<dbReference type="FunFam" id="3.30.160.60:FF:004935">
    <property type="match status" value="1"/>
</dbReference>
<dbReference type="FunFam" id="3.30.160.60:FF:005272">
    <property type="match status" value="1"/>
</dbReference>
<dbReference type="FunFam" id="3.30.160.60:FF:000295">
    <property type="entry name" value="zinc finger protein 19"/>
    <property type="match status" value="1"/>
</dbReference>
<dbReference type="FunFam" id="3.30.160.60:FF:002343">
    <property type="entry name" value="Zinc finger protein 33A"/>
    <property type="match status" value="1"/>
</dbReference>
<dbReference type="FunFam" id="3.30.160.60:FF:002402">
    <property type="entry name" value="Zinc finger protein 347"/>
    <property type="match status" value="1"/>
</dbReference>
<dbReference type="FunFam" id="3.30.160.60:FF:001437">
    <property type="entry name" value="Zinc finger protein 594"/>
    <property type="match status" value="1"/>
</dbReference>
<dbReference type="FunFam" id="3.30.160.60:FF:000361">
    <property type="entry name" value="Zinc finger protein 658"/>
    <property type="match status" value="9"/>
</dbReference>
<dbReference type="FunFam" id="3.30.160.60:FF:001745">
    <property type="entry name" value="Zinc finger protein 658"/>
    <property type="match status" value="2"/>
</dbReference>
<dbReference type="FunFam" id="3.30.160.60:FF:001922">
    <property type="entry name" value="Zinc finger protein 658"/>
    <property type="match status" value="2"/>
</dbReference>
<dbReference type="FunFam" id="3.30.160.60:FF:002346">
    <property type="entry name" value="Zinc finger protein 658"/>
    <property type="match status" value="1"/>
</dbReference>
<dbReference type="FunFam" id="3.30.160.60:FF:003209">
    <property type="entry name" value="Zinc finger protein 658B"/>
    <property type="match status" value="1"/>
</dbReference>
<dbReference type="FunFam" id="3.30.160.60:FF:000057">
    <property type="entry name" value="Zinc finger with KRAB and SCAN domains 4"/>
    <property type="match status" value="1"/>
</dbReference>
<dbReference type="Gene3D" id="6.10.140.140">
    <property type="match status" value="1"/>
</dbReference>
<dbReference type="Gene3D" id="3.30.160.60">
    <property type="entry name" value="Classic Zinc Finger"/>
    <property type="match status" value="22"/>
</dbReference>
<dbReference type="InterPro" id="IPR001909">
    <property type="entry name" value="KRAB"/>
</dbReference>
<dbReference type="InterPro" id="IPR036051">
    <property type="entry name" value="KRAB_dom_sf"/>
</dbReference>
<dbReference type="InterPro" id="IPR050826">
    <property type="entry name" value="Krueppel_C2H2_ZnFinger"/>
</dbReference>
<dbReference type="InterPro" id="IPR036236">
    <property type="entry name" value="Znf_C2H2_sf"/>
</dbReference>
<dbReference type="InterPro" id="IPR013087">
    <property type="entry name" value="Znf_C2H2_type"/>
</dbReference>
<dbReference type="PANTHER" id="PTHR24377">
    <property type="entry name" value="IP01015P-RELATED"/>
    <property type="match status" value="1"/>
</dbReference>
<dbReference type="Pfam" id="PF01352">
    <property type="entry name" value="KRAB"/>
    <property type="match status" value="1"/>
</dbReference>
<dbReference type="Pfam" id="PF00096">
    <property type="entry name" value="zf-C2H2"/>
    <property type="match status" value="20"/>
</dbReference>
<dbReference type="SMART" id="SM00349">
    <property type="entry name" value="KRAB"/>
    <property type="match status" value="1"/>
</dbReference>
<dbReference type="SMART" id="SM00355">
    <property type="entry name" value="ZnF_C2H2"/>
    <property type="match status" value="20"/>
</dbReference>
<dbReference type="SUPFAM" id="SSF57667">
    <property type="entry name" value="beta-beta-alpha zinc fingers"/>
    <property type="match status" value="14"/>
</dbReference>
<dbReference type="SUPFAM" id="SSF109640">
    <property type="entry name" value="KRAB domain (Kruppel-associated box)"/>
    <property type="match status" value="1"/>
</dbReference>
<dbReference type="PROSITE" id="PS50805">
    <property type="entry name" value="KRAB"/>
    <property type="match status" value="1"/>
</dbReference>
<dbReference type="PROSITE" id="PS00028">
    <property type="entry name" value="ZINC_FINGER_C2H2_1"/>
    <property type="match status" value="19"/>
</dbReference>
<dbReference type="PROSITE" id="PS50157">
    <property type="entry name" value="ZINC_FINGER_C2H2_2"/>
    <property type="match status" value="21"/>
</dbReference>
<organism>
    <name type="scientific">Homo sapiens</name>
    <name type="common">Human</name>
    <dbReference type="NCBI Taxonomy" id="9606"/>
    <lineage>
        <taxon>Eukaryota</taxon>
        <taxon>Metazoa</taxon>
        <taxon>Chordata</taxon>
        <taxon>Craniata</taxon>
        <taxon>Vertebrata</taxon>
        <taxon>Euteleostomi</taxon>
        <taxon>Mammalia</taxon>
        <taxon>Eutheria</taxon>
        <taxon>Euarchontoglires</taxon>
        <taxon>Primates</taxon>
        <taxon>Haplorrhini</taxon>
        <taxon>Catarrhini</taxon>
        <taxon>Hominidae</taxon>
        <taxon>Homo</taxon>
    </lineage>
</organism>
<sequence>MNMSQASVSFQDVTVEFTREEWQHLGPVERTLYRDVMLENYSHLISVGYCITKPKVISKLEKGEEPWSLEDEFLNQRYPGYFKVDHIKGIREKQEKPLWQEIFISDADKTLSKEGQKVLEKPFNLEIAPELSEKISCKCDSHRMNLPVASQLIISERKYSRKKTEYMNVCEKLQLDIKHEKAHAEEKSYEHGENAKAFSYKKDQHWKFQTLEESFECDGSGQGLYDKTICITPQSFLTGEKSCKDDEFRKNFDKITLFNHMRTDTRGKCSDLNEYGTSCDKTTAVEYNKVHMAMTHYECNERGINFSRKSPLTQSQRTITGWSAFESNKCEENFSQSSAHIVHQKTQAGDKFGEHNECTDALYQKLDFTAHQRIHTEDKFYLSDEHGKCRKSFYRKAHLIQHQRPHSGEKTYQYEECAKSFCSSSHPIQHPGTYVGFKLYECNECGKAFCQNSNLSKHLRIHTKEKPCDNNGCGRSYKSPLIGHQKTDAEMELCGGSEYGKTSHLKGHQRILMGEKPYECIECGKTFSKTSHLRAHQRIHTGEKPYECVECEKTFSHKTHLSVHQRVHTGEKPYECNDCGKSFTYNSALRAHQRIHTGEKPYECSDCEKTFAHNSALRAHHRIHTGEKPYECNECGRSFAHISVLKAHQRIHTGEKPYECNECGRSFTYNSALRAHQRIHTGRKPYECSDCEKTFAHNSALKIHQRIHTGEKPYECNECEKTFAHNSALRAHQNIHTGEKLYECSECGKTFFQKTRLSTHRRIHTGEKPYECSKCGKTFSQKSYLSGHERIHTGEKPYECNVCGKTFVYKAALIVHQRIHTGEKPYECNQCGKTFSQRTHLCAHQRIHTGEKPYECNECGKTFADNSALRAHHRIHTGEKPYECNDCGKTFSKTSHLRAHLRTRSGEKPYECSECGKTFSEKSYVSAHQRVHTGEKPYECNVCGKPFAHNSTLRVHQRIHTGEKSYECNDCGKTFSQKSHLSAHQRIHTGEKPYECNECGKAFAQNSTLRVHQRIHTGEKPYECDECGKTFVRKAALRVHHTRMHTREKTLACNGFGKS</sequence>
<keyword id="KW-0025">Alternative splicing</keyword>
<keyword id="KW-0238">DNA-binding</keyword>
<keyword id="KW-1017">Isopeptide bond</keyword>
<keyword id="KW-0479">Metal-binding</keyword>
<keyword id="KW-0539">Nucleus</keyword>
<keyword id="KW-1267">Proteomics identification</keyword>
<keyword id="KW-1185">Reference proteome</keyword>
<keyword id="KW-0677">Repeat</keyword>
<keyword id="KW-0678">Repressor</keyword>
<keyword id="KW-0690">Ribosome biogenesis</keyword>
<keyword id="KW-0804">Transcription</keyword>
<keyword id="KW-0805">Transcription regulation</keyword>
<keyword id="KW-0832">Ubl conjugation</keyword>
<keyword id="KW-0862">Zinc</keyword>
<keyword id="KW-0863">Zinc-finger</keyword>
<gene>
    <name type="primary">ZNF658</name>
</gene>
<evidence type="ECO:0000255" key="1">
    <source>
        <dbReference type="PROSITE-ProRule" id="PRU00042"/>
    </source>
</evidence>
<evidence type="ECO:0000255" key="2">
    <source>
        <dbReference type="PROSITE-ProRule" id="PRU00119"/>
    </source>
</evidence>
<evidence type="ECO:0000269" key="3">
    <source>
    </source>
</evidence>
<evidence type="ECO:0000303" key="4">
    <source>
    </source>
</evidence>
<evidence type="ECO:0000305" key="5"/>
<evidence type="ECO:0007744" key="6">
    <source>
    </source>
</evidence>
<reference key="1">
    <citation type="journal article" date="2004" name="Nat. Genet.">
        <title>Complete sequencing and characterization of 21,243 full-length human cDNAs.</title>
        <authorList>
            <person name="Ota T."/>
            <person name="Suzuki Y."/>
            <person name="Nishikawa T."/>
            <person name="Otsuki T."/>
            <person name="Sugiyama T."/>
            <person name="Irie R."/>
            <person name="Wakamatsu A."/>
            <person name="Hayashi K."/>
            <person name="Sato H."/>
            <person name="Nagai K."/>
            <person name="Kimura K."/>
            <person name="Makita H."/>
            <person name="Sekine M."/>
            <person name="Obayashi M."/>
            <person name="Nishi T."/>
            <person name="Shibahara T."/>
            <person name="Tanaka T."/>
            <person name="Ishii S."/>
            <person name="Yamamoto J."/>
            <person name="Saito K."/>
            <person name="Kawai Y."/>
            <person name="Isono Y."/>
            <person name="Nakamura Y."/>
            <person name="Nagahari K."/>
            <person name="Murakami K."/>
            <person name="Yasuda T."/>
            <person name="Iwayanagi T."/>
            <person name="Wagatsuma M."/>
            <person name="Shiratori A."/>
            <person name="Sudo H."/>
            <person name="Hosoiri T."/>
            <person name="Kaku Y."/>
            <person name="Kodaira H."/>
            <person name="Kondo H."/>
            <person name="Sugawara M."/>
            <person name="Takahashi M."/>
            <person name="Kanda K."/>
            <person name="Yokoi T."/>
            <person name="Furuya T."/>
            <person name="Kikkawa E."/>
            <person name="Omura Y."/>
            <person name="Abe K."/>
            <person name="Kamihara K."/>
            <person name="Katsuta N."/>
            <person name="Sato K."/>
            <person name="Tanikawa M."/>
            <person name="Yamazaki M."/>
            <person name="Ninomiya K."/>
            <person name="Ishibashi T."/>
            <person name="Yamashita H."/>
            <person name="Murakawa K."/>
            <person name="Fujimori K."/>
            <person name="Tanai H."/>
            <person name="Kimata M."/>
            <person name="Watanabe M."/>
            <person name="Hiraoka S."/>
            <person name="Chiba Y."/>
            <person name="Ishida S."/>
            <person name="Ono Y."/>
            <person name="Takiguchi S."/>
            <person name="Watanabe S."/>
            <person name="Yosida M."/>
            <person name="Hotuta T."/>
            <person name="Kusano J."/>
            <person name="Kanehori K."/>
            <person name="Takahashi-Fujii A."/>
            <person name="Hara H."/>
            <person name="Tanase T.-O."/>
            <person name="Nomura Y."/>
            <person name="Togiya S."/>
            <person name="Komai F."/>
            <person name="Hara R."/>
            <person name="Takeuchi K."/>
            <person name="Arita M."/>
            <person name="Imose N."/>
            <person name="Musashino K."/>
            <person name="Yuuki H."/>
            <person name="Oshima A."/>
            <person name="Sasaki N."/>
            <person name="Aotsuka S."/>
            <person name="Yoshikawa Y."/>
            <person name="Matsunawa H."/>
            <person name="Ichihara T."/>
            <person name="Shiohata N."/>
            <person name="Sano S."/>
            <person name="Moriya S."/>
            <person name="Momiyama H."/>
            <person name="Satoh N."/>
            <person name="Takami S."/>
            <person name="Terashima Y."/>
            <person name="Suzuki O."/>
            <person name="Nakagawa S."/>
            <person name="Senoh A."/>
            <person name="Mizoguchi H."/>
            <person name="Goto Y."/>
            <person name="Shimizu F."/>
            <person name="Wakebe H."/>
            <person name="Hishigaki H."/>
            <person name="Watanabe T."/>
            <person name="Sugiyama A."/>
            <person name="Takemoto M."/>
            <person name="Kawakami B."/>
            <person name="Yamazaki M."/>
            <person name="Watanabe K."/>
            <person name="Kumagai A."/>
            <person name="Itakura S."/>
            <person name="Fukuzumi Y."/>
            <person name="Fujimori Y."/>
            <person name="Komiyama M."/>
            <person name="Tashiro H."/>
            <person name="Tanigami A."/>
            <person name="Fujiwara T."/>
            <person name="Ono T."/>
            <person name="Yamada K."/>
            <person name="Fujii Y."/>
            <person name="Ozaki K."/>
            <person name="Hirao M."/>
            <person name="Ohmori Y."/>
            <person name="Kawabata A."/>
            <person name="Hikiji T."/>
            <person name="Kobatake N."/>
            <person name="Inagaki H."/>
            <person name="Ikema Y."/>
            <person name="Okamoto S."/>
            <person name="Okitani R."/>
            <person name="Kawakami T."/>
            <person name="Noguchi S."/>
            <person name="Itoh T."/>
            <person name="Shigeta K."/>
            <person name="Senba T."/>
            <person name="Matsumura K."/>
            <person name="Nakajima Y."/>
            <person name="Mizuno T."/>
            <person name="Morinaga M."/>
            <person name="Sasaki M."/>
            <person name="Togashi T."/>
            <person name="Oyama M."/>
            <person name="Hata H."/>
            <person name="Watanabe M."/>
            <person name="Komatsu T."/>
            <person name="Mizushima-Sugano J."/>
            <person name="Satoh T."/>
            <person name="Shirai Y."/>
            <person name="Takahashi Y."/>
            <person name="Nakagawa K."/>
            <person name="Okumura K."/>
            <person name="Nagase T."/>
            <person name="Nomura N."/>
            <person name="Kikuchi H."/>
            <person name="Masuho Y."/>
            <person name="Yamashita R."/>
            <person name="Nakai K."/>
            <person name="Yada T."/>
            <person name="Nakamura Y."/>
            <person name="Ohara O."/>
            <person name="Isogai T."/>
            <person name="Sugano S."/>
        </authorList>
    </citation>
    <scope>NUCLEOTIDE SEQUENCE [LARGE SCALE MRNA] (ISOFORM 1)</scope>
    <source>
        <tissue>Teratocarcinoma</tissue>
        <tissue>Testis</tissue>
    </source>
</reference>
<reference key="2">
    <citation type="journal article" date="2004" name="Nature">
        <title>DNA sequence and analysis of human chromosome 9.</title>
        <authorList>
            <person name="Humphray S.J."/>
            <person name="Oliver K."/>
            <person name="Hunt A.R."/>
            <person name="Plumb R.W."/>
            <person name="Loveland J.E."/>
            <person name="Howe K.L."/>
            <person name="Andrews T.D."/>
            <person name="Searle S."/>
            <person name="Hunt S.E."/>
            <person name="Scott C.E."/>
            <person name="Jones M.C."/>
            <person name="Ainscough R."/>
            <person name="Almeida J.P."/>
            <person name="Ambrose K.D."/>
            <person name="Ashwell R.I.S."/>
            <person name="Babbage A.K."/>
            <person name="Babbage S."/>
            <person name="Bagguley C.L."/>
            <person name="Bailey J."/>
            <person name="Banerjee R."/>
            <person name="Barker D.J."/>
            <person name="Barlow K.F."/>
            <person name="Bates K."/>
            <person name="Beasley H."/>
            <person name="Beasley O."/>
            <person name="Bird C.P."/>
            <person name="Bray-Allen S."/>
            <person name="Brown A.J."/>
            <person name="Brown J.Y."/>
            <person name="Burford D."/>
            <person name="Burrill W."/>
            <person name="Burton J."/>
            <person name="Carder C."/>
            <person name="Carter N.P."/>
            <person name="Chapman J.C."/>
            <person name="Chen Y."/>
            <person name="Clarke G."/>
            <person name="Clark S.Y."/>
            <person name="Clee C.M."/>
            <person name="Clegg S."/>
            <person name="Collier R.E."/>
            <person name="Corby N."/>
            <person name="Crosier M."/>
            <person name="Cummings A.T."/>
            <person name="Davies J."/>
            <person name="Dhami P."/>
            <person name="Dunn M."/>
            <person name="Dutta I."/>
            <person name="Dyer L.W."/>
            <person name="Earthrowl M.E."/>
            <person name="Faulkner L."/>
            <person name="Fleming C.J."/>
            <person name="Frankish A."/>
            <person name="Frankland J.A."/>
            <person name="French L."/>
            <person name="Fricker D.G."/>
            <person name="Garner P."/>
            <person name="Garnett J."/>
            <person name="Ghori J."/>
            <person name="Gilbert J.G.R."/>
            <person name="Glison C."/>
            <person name="Grafham D.V."/>
            <person name="Gribble S."/>
            <person name="Griffiths C."/>
            <person name="Griffiths-Jones S."/>
            <person name="Grocock R."/>
            <person name="Guy J."/>
            <person name="Hall R.E."/>
            <person name="Hammond S."/>
            <person name="Harley J.L."/>
            <person name="Harrison E.S.I."/>
            <person name="Hart E.A."/>
            <person name="Heath P.D."/>
            <person name="Henderson C.D."/>
            <person name="Hopkins B.L."/>
            <person name="Howard P.J."/>
            <person name="Howden P.J."/>
            <person name="Huckle E."/>
            <person name="Johnson C."/>
            <person name="Johnson D."/>
            <person name="Joy A.A."/>
            <person name="Kay M."/>
            <person name="Keenan S."/>
            <person name="Kershaw J.K."/>
            <person name="Kimberley A.M."/>
            <person name="King A."/>
            <person name="Knights A."/>
            <person name="Laird G.K."/>
            <person name="Langford C."/>
            <person name="Lawlor S."/>
            <person name="Leongamornlert D.A."/>
            <person name="Leversha M."/>
            <person name="Lloyd C."/>
            <person name="Lloyd D.M."/>
            <person name="Lovell J."/>
            <person name="Martin S."/>
            <person name="Mashreghi-Mohammadi M."/>
            <person name="Matthews L."/>
            <person name="McLaren S."/>
            <person name="McLay K.E."/>
            <person name="McMurray A."/>
            <person name="Milne S."/>
            <person name="Nickerson T."/>
            <person name="Nisbett J."/>
            <person name="Nordsiek G."/>
            <person name="Pearce A.V."/>
            <person name="Peck A.I."/>
            <person name="Porter K.M."/>
            <person name="Pandian R."/>
            <person name="Pelan S."/>
            <person name="Phillimore B."/>
            <person name="Povey S."/>
            <person name="Ramsey Y."/>
            <person name="Rand V."/>
            <person name="Scharfe M."/>
            <person name="Sehra H.K."/>
            <person name="Shownkeen R."/>
            <person name="Sims S.K."/>
            <person name="Skuce C.D."/>
            <person name="Smith M."/>
            <person name="Steward C.A."/>
            <person name="Swarbreck D."/>
            <person name="Sycamore N."/>
            <person name="Tester J."/>
            <person name="Thorpe A."/>
            <person name="Tracey A."/>
            <person name="Tromans A."/>
            <person name="Thomas D.W."/>
            <person name="Wall M."/>
            <person name="Wallis J.M."/>
            <person name="West A.P."/>
            <person name="Whitehead S.L."/>
            <person name="Willey D.L."/>
            <person name="Williams S.A."/>
            <person name="Wilming L."/>
            <person name="Wray P.W."/>
            <person name="Young L."/>
            <person name="Ashurst J.L."/>
            <person name="Coulson A."/>
            <person name="Blocker H."/>
            <person name="Durbin R.M."/>
            <person name="Sulston J.E."/>
            <person name="Hubbard T."/>
            <person name="Jackson M.J."/>
            <person name="Bentley D.R."/>
            <person name="Beck S."/>
            <person name="Rogers J."/>
            <person name="Dunham I."/>
        </authorList>
    </citation>
    <scope>NUCLEOTIDE SEQUENCE [LARGE SCALE GENOMIC DNA]</scope>
</reference>
<reference key="3">
    <citation type="journal article" date="2004" name="Genome Res.">
        <title>The status, quality, and expansion of the NIH full-length cDNA project: the Mammalian Gene Collection (MGC).</title>
        <authorList>
            <consortium name="The MGC Project Team"/>
        </authorList>
    </citation>
    <scope>NUCLEOTIDE SEQUENCE [LARGE SCALE MRNA] (ISOFORM 2)</scope>
    <source>
        <tissue>Brain</tissue>
    </source>
</reference>
<reference key="4">
    <citation type="journal article" date="2007" name="BMC Genomics">
        <title>The full-ORF clone resource of the German cDNA consortium.</title>
        <authorList>
            <person name="Bechtel S."/>
            <person name="Rosenfelder H."/>
            <person name="Duda A."/>
            <person name="Schmidt C.P."/>
            <person name="Ernst U."/>
            <person name="Wellenreuther R."/>
            <person name="Mehrle A."/>
            <person name="Schuster C."/>
            <person name="Bahr A."/>
            <person name="Bloecker H."/>
            <person name="Heubner D."/>
            <person name="Hoerlein A."/>
            <person name="Michel G."/>
            <person name="Wedler H."/>
            <person name="Koehrer K."/>
            <person name="Ottenwaelder B."/>
            <person name="Poustka A."/>
            <person name="Wiemann S."/>
            <person name="Schupp I."/>
        </authorList>
    </citation>
    <scope>NUCLEOTIDE SEQUENCE [LARGE SCALE MRNA] OF 360-1059 (ISOFORM 1)</scope>
    <source>
        <tissue>Subthalamic nucleus</tissue>
    </source>
</reference>
<reference key="5">
    <citation type="journal article" date="2015" name="Mol. Cell. Biol.">
        <title>The zinc finger protein ZNF658 regulates the transcription of genes involved in zinc homeostasis and affects ribosome biogenesis through the zinc transcriptional regulatory element.</title>
        <authorList>
            <person name="Ogo O.A."/>
            <person name="Tyson J."/>
            <person name="Cockell S.J."/>
            <person name="Howard A."/>
            <person name="Valentine R.A."/>
            <person name="Ford D."/>
        </authorList>
    </citation>
    <scope>FUNCTION</scope>
</reference>
<reference key="6">
    <citation type="journal article" date="2017" name="Nat. Struct. Mol. Biol.">
        <title>Site-specific mapping of the human SUMO proteome reveals co-modification with phosphorylation.</title>
        <authorList>
            <person name="Hendriks I.A."/>
            <person name="Lyon D."/>
            <person name="Young C."/>
            <person name="Jensen L.J."/>
            <person name="Vertegaal A.C."/>
            <person name="Nielsen M.L."/>
        </authorList>
    </citation>
    <scope>SUMOYLATION [LARGE SCALE ANALYSIS] AT LYS-178</scope>
    <scope>IDENTIFICATION BY MASS SPECTROMETRY [LARGE SCALE ANALYSIS]</scope>
</reference>
<comment type="function">
    <text evidence="3">Mediates transcriptional repression in response to zinc. Represses several genes, including SLC30A5, SLC30A10 and CBWD1, by binding to the zinc transcriptional regulatory element (ZTRE) (5'-C[AC]C[TAG]CC[TC]-N(0-50)-[GA]G[ATC]G[TG]G-3') found in the promoter region. May play a role in the control of ribosome biogenesis, regulating predominantly rRNA levels, as well as those of several ribosomal proteins, thus coordinating this highly zinc-demanding process with the available zinc supply.</text>
</comment>
<comment type="subcellular location">
    <subcellularLocation>
        <location evidence="5">Nucleus</location>
    </subcellularLocation>
</comment>
<comment type="alternative products">
    <event type="alternative splicing"/>
    <isoform>
        <id>Q5TYW1-1</id>
        <name>1</name>
        <sequence type="displayed"/>
    </isoform>
    <isoform>
        <id>Q5TYW1-2</id>
        <name>2</name>
        <sequence type="described" ref="VSP_023671 VSP_023672"/>
    </isoform>
</comment>
<comment type="similarity">
    <text evidence="5">Belongs to the krueppel C2H2-type zinc-finger protein family.</text>
</comment>
<comment type="sequence caution" evidence="5">
    <conflict type="erroneous initiation">
        <sequence resource="EMBL-CDS" id="AAH31626"/>
    </conflict>
</comment>
<comment type="sequence caution" evidence="5">
    <conflict type="erroneous initiation">
        <sequence resource="EMBL-CDS" id="BAB14145"/>
    </conflict>
</comment>
<comment type="sequence caution" evidence="5">
    <conflict type="erroneous initiation">
        <sequence resource="EMBL-CDS" id="CAB53677"/>
    </conflict>
</comment>
<accession>Q5TYW1</accession>
<accession>Q6PIP3</accession>
<accession>Q96M55</accession>
<accession>Q9H9S6</accession>
<accession>Q9UG02</accession>
<protein>
    <recommendedName>
        <fullName>Zinc finger protein 658</fullName>
    </recommendedName>
</protein>
<name>ZN658_HUMAN</name>
<feature type="chain" id="PRO_0000280433" description="Zinc finger protein 658">
    <location>
        <begin position="1"/>
        <end position="1059"/>
    </location>
</feature>
<feature type="domain" description="KRAB" evidence="2">
    <location>
        <begin position="8"/>
        <end position="79"/>
    </location>
</feature>
<feature type="zinc finger region" description="C2H2-type 1; degenerate" evidence="1">
    <location>
        <begin position="325"/>
        <end position="347"/>
    </location>
</feature>
<feature type="zinc finger region" description="C2H2-type 2; degenerate" evidence="1">
    <location>
        <begin position="352"/>
        <end position="375"/>
    </location>
</feature>
<feature type="zinc finger region" description="C2H2-type 3; degenerate" evidence="1">
    <location>
        <begin position="381"/>
        <end position="406"/>
    </location>
</feature>
<feature type="zinc finger region" description="C2H2-type 4; degenerate" evidence="1">
    <location>
        <begin position="412"/>
        <end position="434"/>
    </location>
</feature>
<feature type="zinc finger region" description="C2H2-type 5" evidence="1">
    <location>
        <begin position="440"/>
        <end position="462"/>
    </location>
</feature>
<feature type="zinc finger region" description="C2H2-type 6" evidence="1">
    <location>
        <begin position="518"/>
        <end position="540"/>
    </location>
</feature>
<feature type="zinc finger region" description="C2H2-type 7" evidence="1">
    <location>
        <begin position="546"/>
        <end position="568"/>
    </location>
</feature>
<feature type="zinc finger region" description="C2H2-type 8" evidence="1">
    <location>
        <begin position="574"/>
        <end position="596"/>
    </location>
</feature>
<feature type="zinc finger region" description="C2H2-type 9" evidence="1">
    <location>
        <begin position="602"/>
        <end position="624"/>
    </location>
</feature>
<feature type="zinc finger region" description="C2H2-type 10" evidence="1">
    <location>
        <begin position="630"/>
        <end position="652"/>
    </location>
</feature>
<feature type="zinc finger region" description="C2H2-type 11" evidence="1">
    <location>
        <begin position="658"/>
        <end position="680"/>
    </location>
</feature>
<feature type="zinc finger region" description="C2H2-type 12" evidence="1">
    <location>
        <begin position="686"/>
        <end position="708"/>
    </location>
</feature>
<feature type="zinc finger region" description="C2H2-type 13" evidence="1">
    <location>
        <begin position="714"/>
        <end position="736"/>
    </location>
</feature>
<feature type="zinc finger region" description="C2H2-type 14" evidence="1">
    <location>
        <begin position="742"/>
        <end position="764"/>
    </location>
</feature>
<feature type="zinc finger region" description="C2H2-type 15" evidence="1">
    <location>
        <begin position="770"/>
        <end position="792"/>
    </location>
</feature>
<feature type="zinc finger region" description="C2H2-type 16" evidence="1">
    <location>
        <begin position="798"/>
        <end position="820"/>
    </location>
</feature>
<feature type="zinc finger region" description="C2H2-type 17" evidence="1">
    <location>
        <begin position="826"/>
        <end position="848"/>
    </location>
</feature>
<feature type="zinc finger region" description="C2H2-type 18" evidence="1">
    <location>
        <begin position="854"/>
        <end position="876"/>
    </location>
</feature>
<feature type="zinc finger region" description="C2H2-type 19; degenerate" evidence="1">
    <location>
        <begin position="882"/>
        <end position="904"/>
    </location>
</feature>
<feature type="zinc finger region" description="C2H2-type 20" evidence="1">
    <location>
        <begin position="910"/>
        <end position="932"/>
    </location>
</feature>
<feature type="zinc finger region" description="C2H2-type 21" evidence="1">
    <location>
        <begin position="938"/>
        <end position="960"/>
    </location>
</feature>
<feature type="zinc finger region" description="C2H2-type 22" evidence="1">
    <location>
        <begin position="966"/>
        <end position="988"/>
    </location>
</feature>
<feature type="zinc finger region" description="C2H2-type 23" evidence="1">
    <location>
        <begin position="994"/>
        <end position="1016"/>
    </location>
</feature>
<feature type="zinc finger region" description="C2H2-type 24" evidence="1">
    <location>
        <begin position="1022"/>
        <end position="1045"/>
    </location>
</feature>
<feature type="cross-link" description="Glycyl lysine isopeptide (Lys-Gly) (interchain with G-Cter in SUMO2)" evidence="6">
    <location>
        <position position="178"/>
    </location>
</feature>
<feature type="splice variant" id="VSP_023671" description="In isoform 2." evidence="4">
    <original>EKPYECSDCEKTFAHNSAL</original>
    <variation>LAVCHVGILMATKSLFHQS</variation>
    <location>
        <begin position="599"/>
        <end position="617"/>
    </location>
</feature>
<feature type="splice variant" id="VSP_023672" description="In isoform 2." evidence="4">
    <location>
        <begin position="618"/>
        <end position="1059"/>
    </location>
</feature>
<feature type="sequence variant" id="VAR_052888" description="In dbSNP:rs2065444.">
    <original>S</original>
    <variation>Y</variation>
    <location>
        <position position="68"/>
    </location>
</feature>